<dbReference type="EC" id="7.6.2.11" evidence="1"/>
<dbReference type="EMBL" id="AE017220">
    <property type="protein sequence ID" value="AAX65083.1"/>
    <property type="molecule type" value="Genomic_DNA"/>
</dbReference>
<dbReference type="RefSeq" id="WP_000531607.1">
    <property type="nucleotide sequence ID" value="NC_006905.1"/>
</dbReference>
<dbReference type="SMR" id="Q57QC8"/>
<dbReference type="KEGG" id="sec:SCH_1177"/>
<dbReference type="HOGENOM" id="CLU_000604_1_1_6"/>
<dbReference type="Proteomes" id="UP000000538">
    <property type="component" value="Chromosome"/>
</dbReference>
<dbReference type="GO" id="GO:0043190">
    <property type="term" value="C:ATP-binding cassette (ABC) transporter complex"/>
    <property type="evidence" value="ECO:0007669"/>
    <property type="project" value="InterPro"/>
</dbReference>
<dbReference type="GO" id="GO:0015594">
    <property type="term" value="F:ABC-type putrescine transporter activity"/>
    <property type="evidence" value="ECO:0007669"/>
    <property type="project" value="InterPro"/>
</dbReference>
<dbReference type="GO" id="GO:0005524">
    <property type="term" value="F:ATP binding"/>
    <property type="evidence" value="ECO:0007669"/>
    <property type="project" value="UniProtKB-KW"/>
</dbReference>
<dbReference type="GO" id="GO:0016887">
    <property type="term" value="F:ATP hydrolysis activity"/>
    <property type="evidence" value="ECO:0007669"/>
    <property type="project" value="InterPro"/>
</dbReference>
<dbReference type="CDD" id="cd03300">
    <property type="entry name" value="ABC_PotA_N"/>
    <property type="match status" value="1"/>
</dbReference>
<dbReference type="FunFam" id="2.40.50.100:FF:000017">
    <property type="entry name" value="Spermidine/putrescine import ATP-binding protein PotA"/>
    <property type="match status" value="1"/>
</dbReference>
<dbReference type="FunFam" id="3.40.50.300:FF:000133">
    <property type="entry name" value="Spermidine/putrescine import ATP-binding protein PotA"/>
    <property type="match status" value="1"/>
</dbReference>
<dbReference type="Gene3D" id="2.40.50.100">
    <property type="match status" value="1"/>
</dbReference>
<dbReference type="Gene3D" id="3.40.50.300">
    <property type="entry name" value="P-loop containing nucleotide triphosphate hydrolases"/>
    <property type="match status" value="1"/>
</dbReference>
<dbReference type="InterPro" id="IPR003593">
    <property type="entry name" value="AAA+_ATPase"/>
</dbReference>
<dbReference type="InterPro" id="IPR050093">
    <property type="entry name" value="ABC_SmlMolc_Importer"/>
</dbReference>
<dbReference type="InterPro" id="IPR003439">
    <property type="entry name" value="ABC_transporter-like_ATP-bd"/>
</dbReference>
<dbReference type="InterPro" id="IPR017871">
    <property type="entry name" value="ABC_transporter-like_CS"/>
</dbReference>
<dbReference type="InterPro" id="IPR008995">
    <property type="entry name" value="Mo/tungstate-bd_C_term_dom"/>
</dbReference>
<dbReference type="InterPro" id="IPR027417">
    <property type="entry name" value="P-loop_NTPase"/>
</dbReference>
<dbReference type="InterPro" id="IPR005893">
    <property type="entry name" value="PotA-like"/>
</dbReference>
<dbReference type="InterPro" id="IPR017879">
    <property type="entry name" value="PotA_ATP-bd"/>
</dbReference>
<dbReference type="InterPro" id="IPR013611">
    <property type="entry name" value="Transp-assoc_OB_typ2"/>
</dbReference>
<dbReference type="NCBIfam" id="TIGR01187">
    <property type="entry name" value="potA"/>
    <property type="match status" value="1"/>
</dbReference>
<dbReference type="NCBIfam" id="NF006987">
    <property type="entry name" value="PRK09452.1"/>
    <property type="match status" value="1"/>
</dbReference>
<dbReference type="PANTHER" id="PTHR42781">
    <property type="entry name" value="SPERMIDINE/PUTRESCINE IMPORT ATP-BINDING PROTEIN POTA"/>
    <property type="match status" value="1"/>
</dbReference>
<dbReference type="PANTHER" id="PTHR42781:SF4">
    <property type="entry name" value="SPERMIDINE_PUTRESCINE IMPORT ATP-BINDING PROTEIN POTA"/>
    <property type="match status" value="1"/>
</dbReference>
<dbReference type="Pfam" id="PF00005">
    <property type="entry name" value="ABC_tran"/>
    <property type="match status" value="1"/>
</dbReference>
<dbReference type="Pfam" id="PF08402">
    <property type="entry name" value="TOBE_2"/>
    <property type="match status" value="1"/>
</dbReference>
<dbReference type="SMART" id="SM00382">
    <property type="entry name" value="AAA"/>
    <property type="match status" value="1"/>
</dbReference>
<dbReference type="SUPFAM" id="SSF50331">
    <property type="entry name" value="MOP-like"/>
    <property type="match status" value="1"/>
</dbReference>
<dbReference type="SUPFAM" id="SSF52540">
    <property type="entry name" value="P-loop containing nucleoside triphosphate hydrolases"/>
    <property type="match status" value="1"/>
</dbReference>
<dbReference type="PROSITE" id="PS00211">
    <property type="entry name" value="ABC_TRANSPORTER_1"/>
    <property type="match status" value="1"/>
</dbReference>
<dbReference type="PROSITE" id="PS50893">
    <property type="entry name" value="ABC_TRANSPORTER_2"/>
    <property type="match status" value="1"/>
</dbReference>
<dbReference type="PROSITE" id="PS51305">
    <property type="entry name" value="POTA"/>
    <property type="match status" value="1"/>
</dbReference>
<organism>
    <name type="scientific">Salmonella choleraesuis (strain SC-B67)</name>
    <dbReference type="NCBI Taxonomy" id="321314"/>
    <lineage>
        <taxon>Bacteria</taxon>
        <taxon>Pseudomonadati</taxon>
        <taxon>Pseudomonadota</taxon>
        <taxon>Gammaproteobacteria</taxon>
        <taxon>Enterobacterales</taxon>
        <taxon>Enterobacteriaceae</taxon>
        <taxon>Salmonella</taxon>
    </lineage>
</organism>
<keyword id="KW-0067">ATP-binding</keyword>
<keyword id="KW-0997">Cell inner membrane</keyword>
<keyword id="KW-1003">Cell membrane</keyword>
<keyword id="KW-0472">Membrane</keyword>
<keyword id="KW-0547">Nucleotide-binding</keyword>
<keyword id="KW-1278">Translocase</keyword>
<keyword id="KW-0813">Transport</keyword>
<protein>
    <recommendedName>
        <fullName evidence="1">Spermidine/putrescine import ATP-binding protein PotA</fullName>
        <ecNumber evidence="1">7.6.2.11</ecNumber>
    </recommendedName>
</protein>
<gene>
    <name evidence="1" type="primary">potA</name>
    <name type="ordered locus">SCH_1177</name>
</gene>
<comment type="function">
    <text evidence="1">Part of the ABC transporter complex PotABCD involved in spermidine/putrescine import. Responsible for energy coupling to the transport system.</text>
</comment>
<comment type="catalytic activity">
    <reaction evidence="1">
        <text>ATP + H2O + polyamine-[polyamine-binding protein]Side 1 = ADP + phosphate + polyamineSide 2 + [polyamine-binding protein]Side 1.</text>
        <dbReference type="EC" id="7.6.2.11"/>
    </reaction>
</comment>
<comment type="subunit">
    <text evidence="1">The complex is composed of two ATP-binding proteins (PotA), two transmembrane proteins (PotB and PotC) and a solute-binding protein (PotD).</text>
</comment>
<comment type="subcellular location">
    <subcellularLocation>
        <location evidence="1">Cell inner membrane</location>
        <topology evidence="1">Peripheral membrane protein</topology>
    </subcellularLocation>
</comment>
<comment type="similarity">
    <text evidence="1">Belongs to the ABC transporter superfamily. Spermidine/putrescine importer (TC 3.A.1.11.1) family.</text>
</comment>
<sequence>MGQSKKLNNQPRSLSPLVLLSGISKSFDGKEVISQLDLTINNGEFLTLLGPSGCGKTTVLRLIAGLETVDAGHIMLDNQDITHVPAENRYVNTVFQSYALFPHMTVFENVAFGLRMQKTPAAEIAPRVTDALRMVQLEEFAQRKPHQLSGGQQQRVAIARAVVNKPRLLLLDESLSALDYKLRKQMQNELKALQRKLGITFVFVTHDQEEALTMSDRIVVMRNGVIEQDGTPREIYEEPKNLFVAGFIGEINRFDATVIERLDEQRVRASVEGRECNIYVNFAVEPGQKLNVLLRPEDLRVEEINDDNHIEGLIGYVRERNYKGMTLESVVELENGKMVMVSEFFNEDDPDFDHSLDQKMAISWVESWEVVLADEEHK</sequence>
<accession>Q57QC8</accession>
<evidence type="ECO:0000255" key="1">
    <source>
        <dbReference type="HAMAP-Rule" id="MF_01726"/>
    </source>
</evidence>
<proteinExistence type="inferred from homology"/>
<reference key="1">
    <citation type="journal article" date="2005" name="Nucleic Acids Res.">
        <title>The genome sequence of Salmonella enterica serovar Choleraesuis, a highly invasive and resistant zoonotic pathogen.</title>
        <authorList>
            <person name="Chiu C.-H."/>
            <person name="Tang P."/>
            <person name="Chu C."/>
            <person name="Hu S."/>
            <person name="Bao Q."/>
            <person name="Yu J."/>
            <person name="Chou Y.-Y."/>
            <person name="Wang H.-S."/>
            <person name="Lee Y.-S."/>
        </authorList>
    </citation>
    <scope>NUCLEOTIDE SEQUENCE [LARGE SCALE GENOMIC DNA]</scope>
    <source>
        <strain>SC-B67</strain>
    </source>
</reference>
<feature type="chain" id="PRO_0000286281" description="Spermidine/putrescine import ATP-binding protein PotA">
    <location>
        <begin position="1"/>
        <end position="378"/>
    </location>
</feature>
<feature type="domain" description="ABC transporter" evidence="1">
    <location>
        <begin position="18"/>
        <end position="248"/>
    </location>
</feature>
<feature type="binding site" evidence="1">
    <location>
        <begin position="50"/>
        <end position="57"/>
    </location>
    <ligand>
        <name>ATP</name>
        <dbReference type="ChEBI" id="CHEBI:30616"/>
    </ligand>
</feature>
<name>POTA_SALCH</name>